<dbReference type="EC" id="3.5.2.9" evidence="1"/>
<dbReference type="EMBL" id="CU928164">
    <property type="protein sequence ID" value="CAR16802.1"/>
    <property type="molecule type" value="Genomic_DNA"/>
</dbReference>
<dbReference type="RefSeq" id="WP_000687171.1">
    <property type="nucleotide sequence ID" value="NC_011750.1"/>
</dbReference>
<dbReference type="RefSeq" id="YP_002406691.1">
    <property type="nucleotide sequence ID" value="NC_011750.1"/>
</dbReference>
<dbReference type="SMR" id="B7NMQ9"/>
<dbReference type="STRING" id="585057.ECIAI39_0665"/>
<dbReference type="KEGG" id="ect:ECIAI39_0665"/>
<dbReference type="PATRIC" id="fig|585057.6.peg.709"/>
<dbReference type="HOGENOM" id="CLU_069535_0_0_6"/>
<dbReference type="Proteomes" id="UP000000749">
    <property type="component" value="Chromosome"/>
</dbReference>
<dbReference type="GO" id="GO:0017168">
    <property type="term" value="F:5-oxoprolinase (ATP-hydrolyzing) activity"/>
    <property type="evidence" value="ECO:0007669"/>
    <property type="project" value="UniProtKB-UniRule"/>
</dbReference>
<dbReference type="GO" id="GO:0005524">
    <property type="term" value="F:ATP binding"/>
    <property type="evidence" value="ECO:0007669"/>
    <property type="project" value="UniProtKB-UniRule"/>
</dbReference>
<dbReference type="GO" id="GO:0005975">
    <property type="term" value="P:carbohydrate metabolic process"/>
    <property type="evidence" value="ECO:0007669"/>
    <property type="project" value="InterPro"/>
</dbReference>
<dbReference type="CDD" id="cd10800">
    <property type="entry name" value="LamB_YcsF_YbgL_like"/>
    <property type="match status" value="1"/>
</dbReference>
<dbReference type="Gene3D" id="3.20.20.370">
    <property type="entry name" value="Glycoside hydrolase/deacetylase"/>
    <property type="match status" value="1"/>
</dbReference>
<dbReference type="HAMAP" id="MF_00691">
    <property type="entry name" value="PxpA"/>
    <property type="match status" value="1"/>
</dbReference>
<dbReference type="InterPro" id="IPR011330">
    <property type="entry name" value="Glyco_hydro/deAcase_b/a-brl"/>
</dbReference>
<dbReference type="InterPro" id="IPR005501">
    <property type="entry name" value="LamB/YcsF/PxpA-like"/>
</dbReference>
<dbReference type="NCBIfam" id="NF003812">
    <property type="entry name" value="PRK05406.1-1"/>
    <property type="match status" value="1"/>
</dbReference>
<dbReference type="NCBIfam" id="NF003814">
    <property type="entry name" value="PRK05406.1-3"/>
    <property type="match status" value="1"/>
</dbReference>
<dbReference type="NCBIfam" id="NF003815">
    <property type="entry name" value="PRK05406.1-4"/>
    <property type="match status" value="1"/>
</dbReference>
<dbReference type="NCBIfam" id="NF003816">
    <property type="entry name" value="PRK05406.1-5"/>
    <property type="match status" value="1"/>
</dbReference>
<dbReference type="PANTHER" id="PTHR30292:SF0">
    <property type="entry name" value="5-OXOPROLINASE SUBUNIT A"/>
    <property type="match status" value="1"/>
</dbReference>
<dbReference type="PANTHER" id="PTHR30292">
    <property type="entry name" value="UNCHARACTERIZED PROTEIN YBGL-RELATED"/>
    <property type="match status" value="1"/>
</dbReference>
<dbReference type="Pfam" id="PF03746">
    <property type="entry name" value="LamB_YcsF"/>
    <property type="match status" value="1"/>
</dbReference>
<dbReference type="SUPFAM" id="SSF88713">
    <property type="entry name" value="Glycoside hydrolase/deacetylase"/>
    <property type="match status" value="1"/>
</dbReference>
<gene>
    <name evidence="1" type="primary">pxpA</name>
    <name type="ordered locus">ECIAI39_0665</name>
</gene>
<organism>
    <name type="scientific">Escherichia coli O7:K1 (strain IAI39 / ExPEC)</name>
    <dbReference type="NCBI Taxonomy" id="585057"/>
    <lineage>
        <taxon>Bacteria</taxon>
        <taxon>Pseudomonadati</taxon>
        <taxon>Pseudomonadota</taxon>
        <taxon>Gammaproteobacteria</taxon>
        <taxon>Enterobacterales</taxon>
        <taxon>Enterobacteriaceae</taxon>
        <taxon>Escherichia</taxon>
    </lineage>
</organism>
<reference key="1">
    <citation type="journal article" date="2009" name="PLoS Genet.">
        <title>Organised genome dynamics in the Escherichia coli species results in highly diverse adaptive paths.</title>
        <authorList>
            <person name="Touchon M."/>
            <person name="Hoede C."/>
            <person name="Tenaillon O."/>
            <person name="Barbe V."/>
            <person name="Baeriswyl S."/>
            <person name="Bidet P."/>
            <person name="Bingen E."/>
            <person name="Bonacorsi S."/>
            <person name="Bouchier C."/>
            <person name="Bouvet O."/>
            <person name="Calteau A."/>
            <person name="Chiapello H."/>
            <person name="Clermont O."/>
            <person name="Cruveiller S."/>
            <person name="Danchin A."/>
            <person name="Diard M."/>
            <person name="Dossat C."/>
            <person name="Karoui M.E."/>
            <person name="Frapy E."/>
            <person name="Garry L."/>
            <person name="Ghigo J.M."/>
            <person name="Gilles A.M."/>
            <person name="Johnson J."/>
            <person name="Le Bouguenec C."/>
            <person name="Lescat M."/>
            <person name="Mangenot S."/>
            <person name="Martinez-Jehanne V."/>
            <person name="Matic I."/>
            <person name="Nassif X."/>
            <person name="Oztas S."/>
            <person name="Petit M.A."/>
            <person name="Pichon C."/>
            <person name="Rouy Z."/>
            <person name="Ruf C.S."/>
            <person name="Schneider D."/>
            <person name="Tourret J."/>
            <person name="Vacherie B."/>
            <person name="Vallenet D."/>
            <person name="Medigue C."/>
            <person name="Rocha E.P.C."/>
            <person name="Denamur E."/>
        </authorList>
    </citation>
    <scope>NUCLEOTIDE SEQUENCE [LARGE SCALE GENOMIC DNA]</scope>
    <source>
        <strain>IAI39 / ExPEC</strain>
    </source>
</reference>
<accession>B7NMQ9</accession>
<proteinExistence type="inferred from homology"/>
<feature type="chain" id="PRO_1000132051" description="5-oxoprolinase subunit A">
    <location>
        <begin position="1"/>
        <end position="244"/>
    </location>
</feature>
<evidence type="ECO:0000255" key="1">
    <source>
        <dbReference type="HAMAP-Rule" id="MF_00691"/>
    </source>
</evidence>
<sequence length="244" mass="25842">MKIDLNADLGEGCVSDVELLTLVSSANIACGFHAGDAQTMQACVREAIKNGVAIGAHPSYPDRENFGRSAMQLPPETVFAQTLYQIGALAAIARAQGGVMCHVKPHGMLYNQAAKEAQLADAIARAVYACDPALILVGLAGSELIRAGERYGLVTREEVFADRGYQADGSLVPRSQPGALIENEEQALAQTLEMVQHGRVKSITGEWATVTAQTVCLHGDGEHALAFARRLRATFAEKGIVVAA</sequence>
<keyword id="KW-0067">ATP-binding</keyword>
<keyword id="KW-0378">Hydrolase</keyword>
<keyword id="KW-0547">Nucleotide-binding</keyword>
<comment type="function">
    <text evidence="1">Catalyzes the cleavage of 5-oxoproline to form L-glutamate coupled to the hydrolysis of ATP to ADP and inorganic phosphate.</text>
</comment>
<comment type="catalytic activity">
    <reaction evidence="1">
        <text>5-oxo-L-proline + ATP + 2 H2O = L-glutamate + ADP + phosphate + H(+)</text>
        <dbReference type="Rhea" id="RHEA:10348"/>
        <dbReference type="ChEBI" id="CHEBI:15377"/>
        <dbReference type="ChEBI" id="CHEBI:15378"/>
        <dbReference type="ChEBI" id="CHEBI:29985"/>
        <dbReference type="ChEBI" id="CHEBI:30616"/>
        <dbReference type="ChEBI" id="CHEBI:43474"/>
        <dbReference type="ChEBI" id="CHEBI:58402"/>
        <dbReference type="ChEBI" id="CHEBI:456216"/>
        <dbReference type="EC" id="3.5.2.9"/>
    </reaction>
</comment>
<comment type="subunit">
    <text evidence="1">Forms a complex composed of PxpA, PxpB and PxpC.</text>
</comment>
<comment type="similarity">
    <text evidence="1">Belongs to the LamB/PxpA family.</text>
</comment>
<protein>
    <recommendedName>
        <fullName evidence="1">5-oxoprolinase subunit A</fullName>
        <shortName evidence="1">5-OPase subunit A</shortName>
        <ecNumber evidence="1">3.5.2.9</ecNumber>
    </recommendedName>
    <alternativeName>
        <fullName evidence="1">5-oxoprolinase (ATP-hydrolyzing) subunit A</fullName>
    </alternativeName>
</protein>
<name>PXPA_ECO7I</name>